<sequence>MASDMPLVQLPQRGERINVPLVQSRSEDQRLVTSARQTDKIDADDLVALANQLNSARQLVKGRACDRLKQIADQMEQLHMAARAVLEDAQRDEHLHNVPCNMEKQPGRIYHLYQKQGSMNKYFSMLAPNEWGYQEKKEEYLGSYRLEYDRSWTPVGEMDRKDEEVARLQQLLQREGPVALRGNPNF</sequence>
<feature type="chain" id="PRO_0000065166" description="Uncharacterized protein C08B11.9">
    <location>
        <begin position="1"/>
        <end position="186"/>
    </location>
</feature>
<reference key="1">
    <citation type="journal article" date="1998" name="Science">
        <title>Genome sequence of the nematode C. elegans: a platform for investigating biology.</title>
        <authorList>
            <consortium name="The C. elegans sequencing consortium"/>
        </authorList>
    </citation>
    <scope>NUCLEOTIDE SEQUENCE [LARGE SCALE GENOMIC DNA]</scope>
    <source>
        <strain>Bristol N2</strain>
    </source>
</reference>
<reference key="2">
    <citation type="journal article" date="1997" name="J. Biochem.">
        <title>Polycistronic expression and RNA-binding specificity of the C. elegans homologue of the spliceosome-associated protein SAP49.</title>
        <authorList>
            <person name="Tanaka Y."/>
            <person name="Ohta A."/>
            <person name="Terashima K."/>
            <person name="Sakamoto H."/>
        </authorList>
    </citation>
    <scope>NUCLEOTIDE SEQUENCE [MRNA] OF 80-186</scope>
    <source>
        <strain>Bristol N2</strain>
    </source>
</reference>
<proteinExistence type="evidence at transcript level"/>
<organism>
    <name type="scientific">Caenorhabditis elegans</name>
    <dbReference type="NCBI Taxonomy" id="6239"/>
    <lineage>
        <taxon>Eukaryota</taxon>
        <taxon>Metazoa</taxon>
        <taxon>Ecdysozoa</taxon>
        <taxon>Nematoda</taxon>
        <taxon>Chromadorea</taxon>
        <taxon>Rhabditida</taxon>
        <taxon>Rhabditina</taxon>
        <taxon>Rhabditomorpha</taxon>
        <taxon>Rhabditoidea</taxon>
        <taxon>Rhabditidae</taxon>
        <taxon>Peloderinae</taxon>
        <taxon>Caenorhabditis</taxon>
    </lineage>
</organism>
<gene>
    <name type="ORF">C08B11.9</name>
</gene>
<accession>Q09227</accession>
<name>YP89_CAEEL</name>
<protein>
    <recommendedName>
        <fullName>Uncharacterized protein C08B11.9</fullName>
    </recommendedName>
    <alternativeName>
        <fullName>1207-1</fullName>
    </alternativeName>
</protein>
<keyword id="KW-1185">Reference proteome</keyword>
<dbReference type="EMBL" id="Z46676">
    <property type="protein sequence ID" value="CAA86668.1"/>
    <property type="molecule type" value="Genomic_DNA"/>
</dbReference>
<dbReference type="EMBL" id="U24189">
    <property type="protein sequence ID" value="AAC47512.1"/>
    <property type="molecule type" value="mRNA"/>
</dbReference>
<dbReference type="PIR" id="T19073">
    <property type="entry name" value="T19073"/>
</dbReference>
<dbReference type="RefSeq" id="NP_001021934.1">
    <property type="nucleotide sequence ID" value="NM_001026763.5"/>
</dbReference>
<dbReference type="SMR" id="Q09227"/>
<dbReference type="DIP" id="DIP-24446N"/>
<dbReference type="FunCoup" id="Q09227">
    <property type="interactions" value="1767"/>
</dbReference>
<dbReference type="IntAct" id="Q09227">
    <property type="interactions" value="1"/>
</dbReference>
<dbReference type="PaxDb" id="6239-C08B11.9"/>
<dbReference type="PeptideAtlas" id="Q09227"/>
<dbReference type="EnsemblMetazoa" id="C08B11.9.1">
    <property type="protein sequence ID" value="C08B11.9.1"/>
    <property type="gene ID" value="WBGene00007436"/>
</dbReference>
<dbReference type="GeneID" id="3564855"/>
<dbReference type="KEGG" id="cel:CELE_C08B11.9"/>
<dbReference type="UCSC" id="C08B11.9">
    <property type="organism name" value="c. elegans"/>
</dbReference>
<dbReference type="AGR" id="WB:WBGene00007436"/>
<dbReference type="CTD" id="3564855"/>
<dbReference type="WormBase" id="C08B11.9">
    <property type="protein sequence ID" value="CE01479"/>
    <property type="gene ID" value="WBGene00007436"/>
</dbReference>
<dbReference type="eggNOG" id="ENOG502QWKE">
    <property type="taxonomic scope" value="Eukaryota"/>
</dbReference>
<dbReference type="GeneTree" id="ENSGT00390000003084"/>
<dbReference type="HOGENOM" id="CLU_102988_0_0_1"/>
<dbReference type="InParanoid" id="Q09227"/>
<dbReference type="OMA" id="MAIDFNI"/>
<dbReference type="OrthoDB" id="9995764at2759"/>
<dbReference type="PhylomeDB" id="Q09227"/>
<dbReference type="PRO" id="PR:Q09227"/>
<dbReference type="Proteomes" id="UP000001940">
    <property type="component" value="Chromosome II"/>
</dbReference>
<dbReference type="Bgee" id="WBGene00007436">
    <property type="expression patterns" value="Expressed in germ line (C elegans) and 4 other cell types or tissues"/>
</dbReference>
<dbReference type="InterPro" id="IPR019534">
    <property type="entry name" value="DUF2452"/>
</dbReference>
<dbReference type="PANTHER" id="PTHR14553:SF1">
    <property type="entry name" value="SIMILAR TO CHROMOSOME 1 OPEN READING FRAME 50"/>
    <property type="match status" value="1"/>
</dbReference>
<dbReference type="PANTHER" id="PTHR14553">
    <property type="entry name" value="UNCHARACTERIZED PROTEIN C1ORF50"/>
    <property type="match status" value="1"/>
</dbReference>
<dbReference type="Pfam" id="PF10504">
    <property type="entry name" value="DUF2452"/>
    <property type="match status" value="1"/>
</dbReference>